<sequence>MKHVLKNDWGPLLAPEFEKEYYRELDVFLKEEYSTHVVYPKIEDIFNALEYTSYENTKVVILGQDPYHGPNQAHGLSFSVQPGVKTPPSLLNMYKELRDEYGYDIPNNGYLVKWAEQGVLLLNTVLTVRQGEANSHKGKGWEHFTDRVIELLNEREKPVIFILWGRHAQAKKKLITNPNHQIIESVHPSPLSARRGFFGSKPYSKVNTILANMGEGEIDWEIPNL</sequence>
<dbReference type="EC" id="3.2.2.27" evidence="1"/>
<dbReference type="EMBL" id="AE016879">
    <property type="protein sequence ID" value="AAP29282.1"/>
    <property type="molecule type" value="Genomic_DNA"/>
</dbReference>
<dbReference type="EMBL" id="AE017334">
    <property type="protein sequence ID" value="AAT34799.1"/>
    <property type="molecule type" value="Genomic_DNA"/>
</dbReference>
<dbReference type="EMBL" id="AE017225">
    <property type="protein sequence ID" value="AAT57538.1"/>
    <property type="molecule type" value="Genomic_DNA"/>
</dbReference>
<dbReference type="RefSeq" id="NP_847796.1">
    <property type="nucleotide sequence ID" value="NC_003997.3"/>
</dbReference>
<dbReference type="RefSeq" id="WP_000683472.1">
    <property type="nucleotide sequence ID" value="NZ_WXXJ01000017.1"/>
</dbReference>
<dbReference type="RefSeq" id="YP_031488.1">
    <property type="nucleotide sequence ID" value="NC_005945.1"/>
</dbReference>
<dbReference type="SMR" id="Q81JQ4"/>
<dbReference type="STRING" id="261594.GBAA_5648"/>
<dbReference type="DNASU" id="1085374"/>
<dbReference type="GeneID" id="45025225"/>
<dbReference type="KEGG" id="ban:BA_5648"/>
<dbReference type="KEGG" id="banh:HYU01_27565"/>
<dbReference type="KEGG" id="bar:GBAA_5648"/>
<dbReference type="KEGG" id="bat:BAS5250"/>
<dbReference type="PATRIC" id="fig|198094.11.peg.5608"/>
<dbReference type="eggNOG" id="COG0692">
    <property type="taxonomic scope" value="Bacteria"/>
</dbReference>
<dbReference type="HOGENOM" id="CLU_032162_3_0_9"/>
<dbReference type="OMA" id="PDNGYLM"/>
<dbReference type="OrthoDB" id="9804372at2"/>
<dbReference type="Proteomes" id="UP000000427">
    <property type="component" value="Chromosome"/>
</dbReference>
<dbReference type="Proteomes" id="UP000000594">
    <property type="component" value="Chromosome"/>
</dbReference>
<dbReference type="GO" id="GO:0005737">
    <property type="term" value="C:cytoplasm"/>
    <property type="evidence" value="ECO:0007669"/>
    <property type="project" value="UniProtKB-SubCell"/>
</dbReference>
<dbReference type="GO" id="GO:0004844">
    <property type="term" value="F:uracil DNA N-glycosylase activity"/>
    <property type="evidence" value="ECO:0007669"/>
    <property type="project" value="UniProtKB-UniRule"/>
</dbReference>
<dbReference type="GO" id="GO:0097510">
    <property type="term" value="P:base-excision repair, AP site formation via deaminated base removal"/>
    <property type="evidence" value="ECO:0007669"/>
    <property type="project" value="TreeGrafter"/>
</dbReference>
<dbReference type="CDD" id="cd10027">
    <property type="entry name" value="UDG-F1-like"/>
    <property type="match status" value="1"/>
</dbReference>
<dbReference type="FunFam" id="3.40.470.10:FF:000001">
    <property type="entry name" value="Uracil-DNA glycosylase"/>
    <property type="match status" value="1"/>
</dbReference>
<dbReference type="Gene3D" id="3.40.470.10">
    <property type="entry name" value="Uracil-DNA glycosylase-like domain"/>
    <property type="match status" value="1"/>
</dbReference>
<dbReference type="HAMAP" id="MF_00148">
    <property type="entry name" value="UDG"/>
    <property type="match status" value="1"/>
</dbReference>
<dbReference type="InterPro" id="IPR002043">
    <property type="entry name" value="UDG_fam1"/>
</dbReference>
<dbReference type="InterPro" id="IPR018085">
    <property type="entry name" value="Ura-DNA_Glyclase_AS"/>
</dbReference>
<dbReference type="InterPro" id="IPR005122">
    <property type="entry name" value="Uracil-DNA_glycosylase-like"/>
</dbReference>
<dbReference type="InterPro" id="IPR036895">
    <property type="entry name" value="Uracil-DNA_glycosylase-like_sf"/>
</dbReference>
<dbReference type="NCBIfam" id="NF003588">
    <property type="entry name" value="PRK05254.1-1"/>
    <property type="match status" value="1"/>
</dbReference>
<dbReference type="NCBIfam" id="NF003589">
    <property type="entry name" value="PRK05254.1-2"/>
    <property type="match status" value="1"/>
</dbReference>
<dbReference type="NCBIfam" id="NF003591">
    <property type="entry name" value="PRK05254.1-4"/>
    <property type="match status" value="1"/>
</dbReference>
<dbReference type="NCBIfam" id="NF003592">
    <property type="entry name" value="PRK05254.1-5"/>
    <property type="match status" value="1"/>
</dbReference>
<dbReference type="NCBIfam" id="TIGR00628">
    <property type="entry name" value="ung"/>
    <property type="match status" value="1"/>
</dbReference>
<dbReference type="PANTHER" id="PTHR11264">
    <property type="entry name" value="URACIL-DNA GLYCOSYLASE"/>
    <property type="match status" value="1"/>
</dbReference>
<dbReference type="PANTHER" id="PTHR11264:SF0">
    <property type="entry name" value="URACIL-DNA GLYCOSYLASE"/>
    <property type="match status" value="1"/>
</dbReference>
<dbReference type="Pfam" id="PF03167">
    <property type="entry name" value="UDG"/>
    <property type="match status" value="1"/>
</dbReference>
<dbReference type="SMART" id="SM00986">
    <property type="entry name" value="UDG"/>
    <property type="match status" value="1"/>
</dbReference>
<dbReference type="SMART" id="SM00987">
    <property type="entry name" value="UreE_C"/>
    <property type="match status" value="1"/>
</dbReference>
<dbReference type="SUPFAM" id="SSF52141">
    <property type="entry name" value="Uracil-DNA glycosylase-like"/>
    <property type="match status" value="1"/>
</dbReference>
<dbReference type="PROSITE" id="PS00130">
    <property type="entry name" value="U_DNA_GLYCOSYLASE"/>
    <property type="match status" value="1"/>
</dbReference>
<reference key="1">
    <citation type="journal article" date="2003" name="Nature">
        <title>The genome sequence of Bacillus anthracis Ames and comparison to closely related bacteria.</title>
        <authorList>
            <person name="Read T.D."/>
            <person name="Peterson S.N."/>
            <person name="Tourasse N.J."/>
            <person name="Baillie L.W."/>
            <person name="Paulsen I.T."/>
            <person name="Nelson K.E."/>
            <person name="Tettelin H."/>
            <person name="Fouts D.E."/>
            <person name="Eisen J.A."/>
            <person name="Gill S.R."/>
            <person name="Holtzapple E.K."/>
            <person name="Okstad O.A."/>
            <person name="Helgason E."/>
            <person name="Rilstone J."/>
            <person name="Wu M."/>
            <person name="Kolonay J.F."/>
            <person name="Beanan M.J."/>
            <person name="Dodson R.J."/>
            <person name="Brinkac L.M."/>
            <person name="Gwinn M.L."/>
            <person name="DeBoy R.T."/>
            <person name="Madpu R."/>
            <person name="Daugherty S.C."/>
            <person name="Durkin A.S."/>
            <person name="Haft D.H."/>
            <person name="Nelson W.C."/>
            <person name="Peterson J.D."/>
            <person name="Pop M."/>
            <person name="Khouri H.M."/>
            <person name="Radune D."/>
            <person name="Benton J.L."/>
            <person name="Mahamoud Y."/>
            <person name="Jiang L."/>
            <person name="Hance I.R."/>
            <person name="Weidman J.F."/>
            <person name="Berry K.J."/>
            <person name="Plaut R.D."/>
            <person name="Wolf A.M."/>
            <person name="Watkins K.L."/>
            <person name="Nierman W.C."/>
            <person name="Hazen A."/>
            <person name="Cline R.T."/>
            <person name="Redmond C."/>
            <person name="Thwaite J.E."/>
            <person name="White O."/>
            <person name="Salzberg S.L."/>
            <person name="Thomason B."/>
            <person name="Friedlander A.M."/>
            <person name="Koehler T.M."/>
            <person name="Hanna P.C."/>
            <person name="Kolstoe A.-B."/>
            <person name="Fraser C.M."/>
        </authorList>
    </citation>
    <scope>NUCLEOTIDE SEQUENCE [LARGE SCALE GENOMIC DNA]</scope>
    <source>
        <strain>Ames / isolate Porton</strain>
    </source>
</reference>
<reference key="2">
    <citation type="journal article" date="2009" name="J. Bacteriol.">
        <title>The complete genome sequence of Bacillus anthracis Ames 'Ancestor'.</title>
        <authorList>
            <person name="Ravel J."/>
            <person name="Jiang L."/>
            <person name="Stanley S.T."/>
            <person name="Wilson M.R."/>
            <person name="Decker R.S."/>
            <person name="Read T.D."/>
            <person name="Worsham P."/>
            <person name="Keim P.S."/>
            <person name="Salzberg S.L."/>
            <person name="Fraser-Liggett C.M."/>
            <person name="Rasko D.A."/>
        </authorList>
    </citation>
    <scope>NUCLEOTIDE SEQUENCE [LARGE SCALE GENOMIC DNA]</scope>
    <source>
        <strain>Ames ancestor</strain>
    </source>
</reference>
<reference key="3">
    <citation type="submission" date="2004-01" db="EMBL/GenBank/DDBJ databases">
        <title>Complete genome sequence of Bacillus anthracis Sterne.</title>
        <authorList>
            <person name="Brettin T.S."/>
            <person name="Bruce D."/>
            <person name="Challacombe J.F."/>
            <person name="Gilna P."/>
            <person name="Han C."/>
            <person name="Hill K."/>
            <person name="Hitchcock P."/>
            <person name="Jackson P."/>
            <person name="Keim P."/>
            <person name="Longmire J."/>
            <person name="Lucas S."/>
            <person name="Okinaka R."/>
            <person name="Richardson P."/>
            <person name="Rubin E."/>
            <person name="Tice H."/>
        </authorList>
    </citation>
    <scope>NUCLEOTIDE SEQUENCE [LARGE SCALE GENOMIC DNA]</scope>
    <source>
        <strain>Sterne</strain>
    </source>
</reference>
<name>UNG_BACAN</name>
<feature type="chain" id="PRO_0000176056" description="Uracil-DNA glycosylase">
    <location>
        <begin position="1"/>
        <end position="225"/>
    </location>
</feature>
<feature type="active site" description="Proton acceptor" evidence="1">
    <location>
        <position position="65"/>
    </location>
</feature>
<accession>Q81JQ4</accession>
<accession>Q6HQA0</accession>
<accession>Q6KJN3</accession>
<keyword id="KW-0963">Cytoplasm</keyword>
<keyword id="KW-0227">DNA damage</keyword>
<keyword id="KW-0234">DNA repair</keyword>
<keyword id="KW-0378">Hydrolase</keyword>
<keyword id="KW-1185">Reference proteome</keyword>
<comment type="function">
    <text evidence="1">Excises uracil residues from the DNA which can arise as a result of misincorporation of dUMP residues by DNA polymerase or due to deamination of cytosine.</text>
</comment>
<comment type="catalytic activity">
    <reaction evidence="1">
        <text>Hydrolyzes single-stranded DNA or mismatched double-stranded DNA and polynucleotides, releasing free uracil.</text>
        <dbReference type="EC" id="3.2.2.27"/>
    </reaction>
</comment>
<comment type="subcellular location">
    <subcellularLocation>
        <location evidence="1">Cytoplasm</location>
    </subcellularLocation>
</comment>
<comment type="similarity">
    <text evidence="1">Belongs to the uracil-DNA glycosylase (UDG) superfamily. UNG family.</text>
</comment>
<proteinExistence type="inferred from homology"/>
<evidence type="ECO:0000255" key="1">
    <source>
        <dbReference type="HAMAP-Rule" id="MF_00148"/>
    </source>
</evidence>
<protein>
    <recommendedName>
        <fullName evidence="1">Uracil-DNA glycosylase</fullName>
        <shortName evidence="1">UDG</shortName>
        <ecNumber evidence="1">3.2.2.27</ecNumber>
    </recommendedName>
</protein>
<gene>
    <name evidence="1" type="primary">ung</name>
    <name type="ordered locus">BA_5648</name>
    <name type="ordered locus">GBAA_5648</name>
    <name type="ordered locus">BAS5250</name>
</gene>
<organism>
    <name type="scientific">Bacillus anthracis</name>
    <dbReference type="NCBI Taxonomy" id="1392"/>
    <lineage>
        <taxon>Bacteria</taxon>
        <taxon>Bacillati</taxon>
        <taxon>Bacillota</taxon>
        <taxon>Bacilli</taxon>
        <taxon>Bacillales</taxon>
        <taxon>Bacillaceae</taxon>
        <taxon>Bacillus</taxon>
        <taxon>Bacillus cereus group</taxon>
    </lineage>
</organism>